<keyword id="KW-0066">ATP synthesis</keyword>
<keyword id="KW-0139">CF(1)</keyword>
<keyword id="KW-0194">Cyanelle</keyword>
<keyword id="KW-0375">Hydrogen ion transport</keyword>
<keyword id="KW-0406">Ion transport</keyword>
<keyword id="KW-0472">Membrane</keyword>
<keyword id="KW-0934">Plastid</keyword>
<keyword id="KW-0793">Thylakoid</keyword>
<keyword id="KW-0813">Transport</keyword>
<protein>
    <recommendedName>
        <fullName evidence="2">ATP synthase subunit delta, cyanelle</fullName>
    </recommendedName>
    <alternativeName>
        <fullName evidence="2">ATP synthase F(1) sector subunit delta</fullName>
    </alternativeName>
    <alternativeName>
        <fullName>F-ATPase subunit delta</fullName>
    </alternativeName>
</protein>
<proteinExistence type="inferred from homology"/>
<evidence type="ECO:0000250" key="1"/>
<evidence type="ECO:0000255" key="2">
    <source>
        <dbReference type="HAMAP-Rule" id="MF_01416"/>
    </source>
</evidence>
<comment type="function">
    <text evidence="2">F(1)F(0) ATP synthase produces ATP from ADP in the presence of a proton or sodium gradient. F-type ATPases consist of two structural domains, F(1) containing the extramembraneous catalytic core and F(0) containing the membrane proton channel, linked together by a central stalk and a peripheral stalk. During catalysis, ATP synthesis in the catalytic domain of F(1) is coupled via a rotary mechanism of the central stalk subunits to proton translocation.</text>
</comment>
<comment type="function">
    <text evidence="2">This protein is part of the stalk that links CF(0) to CF(1). It either transmits conformational changes from CF(0) to CF(1) or is implicated in proton conduction.</text>
</comment>
<comment type="subunit">
    <text evidence="2">F-type ATPases have 2 components, F(1) - the catalytic core - and F(0) - the membrane proton channel. F(1) has five subunits: alpha(3), beta(3), gamma(1), delta(1), epsilon(1). CF(0) has four main subunits: a(1), b(1), b'(1) and c(10-14). The alpha and beta chains form an alternating ring which encloses part of the gamma chain. F(1) is attached to F(0) by a central stalk formed by the gamma and epsilon chains, while a peripheral stalk is formed by the delta, b and b' chains.</text>
</comment>
<comment type="subcellular location">
    <subcellularLocation>
        <location evidence="1">Plastid</location>
        <location evidence="1">Cyanelle thylakoid membrane</location>
    </subcellularLocation>
</comment>
<comment type="similarity">
    <text evidence="2">Belongs to the ATPase delta chain family.</text>
</comment>
<feature type="chain" id="PRO_0000193498" description="ATP synthase subunit delta, cyanelle">
    <location>
        <begin position="1"/>
        <end position="186"/>
    </location>
</feature>
<gene>
    <name evidence="2" type="primary">atpD</name>
</gene>
<organism>
    <name type="scientific">Cyanophora paradoxa</name>
    <dbReference type="NCBI Taxonomy" id="2762"/>
    <lineage>
        <taxon>Eukaryota</taxon>
        <taxon>Glaucocystophyceae</taxon>
        <taxon>Cyanophoraceae</taxon>
        <taxon>Cyanophora</taxon>
    </lineage>
</organism>
<accession>P48082</accession>
<sequence length="186" mass="20767">MKQSAVVSKITQPYAEALLEMAQKYDIVETVNNDITLILNCLQNSTKLQQFLANPLVKKSSKKNFFEKTLAKEIHPYTFKFLLLVIDRGRISCLEIIAQKYQSLILKLTKTELAEVVTAVPLSSEQEAALNNIIKELTNANEVKLVFKIDQNLIGGFIINIGSKVVDASLLGQLLRIGNYLGLETV</sequence>
<name>ATPD_CYAPA</name>
<geneLocation type="cyanelle"/>
<reference key="1">
    <citation type="journal article" date="1995" name="Plant Mol. Biol. Rep.">
        <title>Nucleotide sequence of the cyanelle DNA from Cyanophora paradoxa.</title>
        <authorList>
            <person name="Stirewalt V.L."/>
            <person name="Michalowski C.B."/>
            <person name="Loeffelhardt W."/>
            <person name="Bohnert H.J."/>
            <person name="Bryant D.A."/>
        </authorList>
    </citation>
    <scope>NUCLEOTIDE SEQUENCE [LARGE SCALE GENOMIC DNA]</scope>
    <source>
        <strain>UTEX LB 555 / Pringsheim</strain>
    </source>
</reference>
<reference key="2">
    <citation type="book" date="1997" name="Eukaryotism and symbiosis">
        <title>The complete sequence of the cyanelle genome of Cyanophora paradoxa: the genetic complexity of a primitive plastid.</title>
        <editorList>
            <person name="Schenk H.E.A."/>
            <person name="Herrmann R."/>
            <person name="Jeon K.W."/>
            <person name="Mueller N.E."/>
            <person name="Schwemmler W."/>
        </editorList>
        <authorList>
            <person name="Loeffelhardt W."/>
            <person name="Stirewalt V.L."/>
            <person name="Michalowski C.B."/>
            <person name="Annarella M."/>
            <person name="Farley J.Y."/>
            <person name="Schluchter W.M."/>
            <person name="Chung S."/>
            <person name="Newmann-Spallart C."/>
            <person name="Steiner J.M."/>
            <person name="Jakowitsch J."/>
            <person name="Bohnert H.J."/>
            <person name="Bryant D.A."/>
        </authorList>
    </citation>
    <scope>NUCLEOTIDE SEQUENCE [LARGE SCALE GENOMIC DNA]</scope>
    <source>
        <strain>UTEX LB 555 / Pringsheim</strain>
    </source>
</reference>
<dbReference type="EMBL" id="U30821">
    <property type="protein sequence ID" value="AAA81254.1"/>
    <property type="molecule type" value="Genomic_DNA"/>
</dbReference>
<dbReference type="PIR" id="T06911">
    <property type="entry name" value="T06911"/>
</dbReference>
<dbReference type="RefSeq" id="NP_043223.1">
    <property type="nucleotide sequence ID" value="NC_001675.1"/>
</dbReference>
<dbReference type="SMR" id="P48082"/>
<dbReference type="GeneID" id="801636"/>
<dbReference type="GO" id="GO:0033115">
    <property type="term" value="C:cyanelle thylakoid membrane"/>
    <property type="evidence" value="ECO:0007669"/>
    <property type="project" value="UniProtKB-SubCell"/>
</dbReference>
<dbReference type="GO" id="GO:0045259">
    <property type="term" value="C:proton-transporting ATP synthase complex"/>
    <property type="evidence" value="ECO:0007669"/>
    <property type="project" value="UniProtKB-KW"/>
</dbReference>
<dbReference type="GO" id="GO:0046933">
    <property type="term" value="F:proton-transporting ATP synthase activity, rotational mechanism"/>
    <property type="evidence" value="ECO:0007669"/>
    <property type="project" value="InterPro"/>
</dbReference>
<dbReference type="Gene3D" id="1.10.520.20">
    <property type="entry name" value="N-terminal domain of the delta subunit of the F1F0-ATP synthase"/>
    <property type="match status" value="1"/>
</dbReference>
<dbReference type="HAMAP" id="MF_01416">
    <property type="entry name" value="ATP_synth_delta_bact"/>
    <property type="match status" value="1"/>
</dbReference>
<dbReference type="InterPro" id="IPR026015">
    <property type="entry name" value="ATP_synth_OSCP/delta_N_sf"/>
</dbReference>
<dbReference type="InterPro" id="IPR020781">
    <property type="entry name" value="ATPase_OSCP/d_CS"/>
</dbReference>
<dbReference type="InterPro" id="IPR000711">
    <property type="entry name" value="ATPase_OSCP/dsu"/>
</dbReference>
<dbReference type="NCBIfam" id="TIGR01145">
    <property type="entry name" value="ATP_synt_delta"/>
    <property type="match status" value="1"/>
</dbReference>
<dbReference type="PANTHER" id="PTHR11910">
    <property type="entry name" value="ATP SYNTHASE DELTA CHAIN"/>
    <property type="match status" value="1"/>
</dbReference>
<dbReference type="Pfam" id="PF00213">
    <property type="entry name" value="OSCP"/>
    <property type="match status" value="1"/>
</dbReference>
<dbReference type="PRINTS" id="PR00125">
    <property type="entry name" value="ATPASEDELTA"/>
</dbReference>
<dbReference type="SUPFAM" id="SSF47928">
    <property type="entry name" value="N-terminal domain of the delta subunit of the F1F0-ATP synthase"/>
    <property type="match status" value="1"/>
</dbReference>
<dbReference type="PROSITE" id="PS00389">
    <property type="entry name" value="ATPASE_DELTA"/>
    <property type="match status" value="1"/>
</dbReference>